<accession>B5F7T8</accession>
<reference key="1">
    <citation type="journal article" date="2011" name="J. Bacteriol.">
        <title>Comparative genomics of 28 Salmonella enterica isolates: evidence for CRISPR-mediated adaptive sublineage evolution.</title>
        <authorList>
            <person name="Fricke W.F."/>
            <person name="Mammel M.K."/>
            <person name="McDermott P.F."/>
            <person name="Tartera C."/>
            <person name="White D.G."/>
            <person name="Leclerc J.E."/>
            <person name="Ravel J."/>
            <person name="Cebula T.A."/>
        </authorList>
    </citation>
    <scope>NUCLEOTIDE SEQUENCE [LARGE SCALE GENOMIC DNA]</scope>
    <source>
        <strain>SL483</strain>
    </source>
</reference>
<organism>
    <name type="scientific">Salmonella agona (strain SL483)</name>
    <dbReference type="NCBI Taxonomy" id="454166"/>
    <lineage>
        <taxon>Bacteria</taxon>
        <taxon>Pseudomonadati</taxon>
        <taxon>Pseudomonadota</taxon>
        <taxon>Gammaproteobacteria</taxon>
        <taxon>Enterobacterales</taxon>
        <taxon>Enterobacteriaceae</taxon>
        <taxon>Salmonella</taxon>
    </lineage>
</organism>
<protein>
    <recommendedName>
        <fullName evidence="1">Large ribosomal subunit protein uL16</fullName>
    </recommendedName>
    <alternativeName>
        <fullName evidence="2">50S ribosomal protein L16</fullName>
    </alternativeName>
</protein>
<gene>
    <name evidence="1" type="primary">rplP</name>
    <name type="ordered locus">SeAg_B3629</name>
</gene>
<evidence type="ECO:0000255" key="1">
    <source>
        <dbReference type="HAMAP-Rule" id="MF_01342"/>
    </source>
</evidence>
<evidence type="ECO:0000305" key="2"/>
<sequence length="136" mass="15194">MLQPKRTKFRKMHKGRNRGLAAGADVSFGSFGLKAVGRGRLTARQIEAARRAMTRAVKRQGKIWIRVFPDKPITEKPLAVRMGKGKGNVEYWVALIQPGKVLYEMDGVPEELAREAFKLAAAKLPIKTTFVTKTVM</sequence>
<proteinExistence type="inferred from homology"/>
<feature type="chain" id="PRO_1000143020" description="Large ribosomal subunit protein uL16">
    <location>
        <begin position="1"/>
        <end position="136"/>
    </location>
</feature>
<keyword id="KW-0687">Ribonucleoprotein</keyword>
<keyword id="KW-0689">Ribosomal protein</keyword>
<keyword id="KW-0694">RNA-binding</keyword>
<keyword id="KW-0699">rRNA-binding</keyword>
<keyword id="KW-0820">tRNA-binding</keyword>
<dbReference type="EMBL" id="CP001138">
    <property type="protein sequence ID" value="ACH51656.1"/>
    <property type="molecule type" value="Genomic_DNA"/>
</dbReference>
<dbReference type="RefSeq" id="WP_000941208.1">
    <property type="nucleotide sequence ID" value="NC_011149.1"/>
</dbReference>
<dbReference type="SMR" id="B5F7T8"/>
<dbReference type="GeneID" id="93035738"/>
<dbReference type="KEGG" id="sea:SeAg_B3629"/>
<dbReference type="HOGENOM" id="CLU_078858_2_1_6"/>
<dbReference type="Proteomes" id="UP000008819">
    <property type="component" value="Chromosome"/>
</dbReference>
<dbReference type="GO" id="GO:0022625">
    <property type="term" value="C:cytosolic large ribosomal subunit"/>
    <property type="evidence" value="ECO:0007669"/>
    <property type="project" value="TreeGrafter"/>
</dbReference>
<dbReference type="GO" id="GO:0019843">
    <property type="term" value="F:rRNA binding"/>
    <property type="evidence" value="ECO:0007669"/>
    <property type="project" value="UniProtKB-UniRule"/>
</dbReference>
<dbReference type="GO" id="GO:0003735">
    <property type="term" value="F:structural constituent of ribosome"/>
    <property type="evidence" value="ECO:0007669"/>
    <property type="project" value="InterPro"/>
</dbReference>
<dbReference type="GO" id="GO:0000049">
    <property type="term" value="F:tRNA binding"/>
    <property type="evidence" value="ECO:0007669"/>
    <property type="project" value="UniProtKB-KW"/>
</dbReference>
<dbReference type="GO" id="GO:0006412">
    <property type="term" value="P:translation"/>
    <property type="evidence" value="ECO:0007669"/>
    <property type="project" value="UniProtKB-UniRule"/>
</dbReference>
<dbReference type="CDD" id="cd01433">
    <property type="entry name" value="Ribosomal_L16_L10e"/>
    <property type="match status" value="1"/>
</dbReference>
<dbReference type="FunFam" id="3.90.1170.10:FF:000001">
    <property type="entry name" value="50S ribosomal protein L16"/>
    <property type="match status" value="1"/>
</dbReference>
<dbReference type="Gene3D" id="3.90.1170.10">
    <property type="entry name" value="Ribosomal protein L10e/L16"/>
    <property type="match status" value="1"/>
</dbReference>
<dbReference type="HAMAP" id="MF_01342">
    <property type="entry name" value="Ribosomal_uL16"/>
    <property type="match status" value="1"/>
</dbReference>
<dbReference type="InterPro" id="IPR047873">
    <property type="entry name" value="Ribosomal_uL16"/>
</dbReference>
<dbReference type="InterPro" id="IPR000114">
    <property type="entry name" value="Ribosomal_uL16_bact-type"/>
</dbReference>
<dbReference type="InterPro" id="IPR020798">
    <property type="entry name" value="Ribosomal_uL16_CS"/>
</dbReference>
<dbReference type="InterPro" id="IPR016180">
    <property type="entry name" value="Ribosomal_uL16_dom"/>
</dbReference>
<dbReference type="InterPro" id="IPR036920">
    <property type="entry name" value="Ribosomal_uL16_sf"/>
</dbReference>
<dbReference type="NCBIfam" id="TIGR01164">
    <property type="entry name" value="rplP_bact"/>
    <property type="match status" value="1"/>
</dbReference>
<dbReference type="PANTHER" id="PTHR12220">
    <property type="entry name" value="50S/60S RIBOSOMAL PROTEIN L16"/>
    <property type="match status" value="1"/>
</dbReference>
<dbReference type="PANTHER" id="PTHR12220:SF13">
    <property type="entry name" value="LARGE RIBOSOMAL SUBUNIT PROTEIN UL16M"/>
    <property type="match status" value="1"/>
</dbReference>
<dbReference type="Pfam" id="PF00252">
    <property type="entry name" value="Ribosomal_L16"/>
    <property type="match status" value="1"/>
</dbReference>
<dbReference type="PRINTS" id="PR00060">
    <property type="entry name" value="RIBOSOMALL16"/>
</dbReference>
<dbReference type="SUPFAM" id="SSF54686">
    <property type="entry name" value="Ribosomal protein L16p/L10e"/>
    <property type="match status" value="1"/>
</dbReference>
<dbReference type="PROSITE" id="PS00586">
    <property type="entry name" value="RIBOSOMAL_L16_1"/>
    <property type="match status" value="1"/>
</dbReference>
<dbReference type="PROSITE" id="PS00701">
    <property type="entry name" value="RIBOSOMAL_L16_2"/>
    <property type="match status" value="1"/>
</dbReference>
<name>RL16_SALA4</name>
<comment type="function">
    <text evidence="1">Binds 23S rRNA and is also seen to make contacts with the A and possibly P site tRNAs.</text>
</comment>
<comment type="subunit">
    <text evidence="1">Part of the 50S ribosomal subunit.</text>
</comment>
<comment type="similarity">
    <text evidence="1">Belongs to the universal ribosomal protein uL16 family.</text>
</comment>